<evidence type="ECO:0000255" key="1">
    <source>
        <dbReference type="HAMAP-Rule" id="MF_01012"/>
    </source>
</evidence>
<reference key="1">
    <citation type="submission" date="2006-08" db="EMBL/GenBank/DDBJ databases">
        <title>Complete sequence of chromosome 1 of Shewanella sp. MR-7.</title>
        <authorList>
            <person name="Copeland A."/>
            <person name="Lucas S."/>
            <person name="Lapidus A."/>
            <person name="Barry K."/>
            <person name="Detter J.C."/>
            <person name="Glavina del Rio T."/>
            <person name="Hammon N."/>
            <person name="Israni S."/>
            <person name="Dalin E."/>
            <person name="Tice H."/>
            <person name="Pitluck S."/>
            <person name="Kiss H."/>
            <person name="Brettin T."/>
            <person name="Bruce D."/>
            <person name="Han C."/>
            <person name="Tapia R."/>
            <person name="Gilna P."/>
            <person name="Schmutz J."/>
            <person name="Larimer F."/>
            <person name="Land M."/>
            <person name="Hauser L."/>
            <person name="Kyrpides N."/>
            <person name="Mikhailova N."/>
            <person name="Nealson K."/>
            <person name="Konstantinidis K."/>
            <person name="Klappenbach J."/>
            <person name="Tiedje J."/>
            <person name="Richardson P."/>
        </authorList>
    </citation>
    <scope>NUCLEOTIDE SEQUENCE [LARGE SCALE GENOMIC DNA]</scope>
    <source>
        <strain>MR-7</strain>
    </source>
</reference>
<sequence length="384" mass="42657">MSTLVQCGYFERGQCQSCRHIKLPMAQQLAAKTQELQQLLAPFVDNAEAQFLPPVVGDSSGFRNKAKMVVLGAAHAPVLGIVSPSGEAVSLCDCLLYPADMQALLHRLERFVQQAGIPPYRVDKAKGELKFILLTRSQVRGEYMLRFVLRSRDAIARIERELPALMAEYPQIKVVSVNLQPIHMAILEGEEEIFLTENTRLEERFNDVPLFIRPKSFFQTNPQVAAKLYQTAREWVADFAPASLWDLFCGVGGFGLHCAAKDIPLTGIEIEAEAIACAKMSAQLMGLDKVQFMALDSTDFAKGDAAQTKPELIIVNPPRRGIGESLCHSLSEFAPKAILYSSCNPKTLAKDLGHIRGYRLTKVQLFDLFPHSDHFEVLALLVKD</sequence>
<feature type="chain" id="PRO_0000282016" description="23S rRNA (uracil(747)-C(5))-methyltransferase RlmC">
    <location>
        <begin position="1"/>
        <end position="384"/>
    </location>
</feature>
<feature type="active site" description="Nucleophile" evidence="1">
    <location>
        <position position="343"/>
    </location>
</feature>
<feature type="binding site" evidence="1">
    <location>
        <position position="7"/>
    </location>
    <ligand>
        <name>[4Fe-4S] cluster</name>
        <dbReference type="ChEBI" id="CHEBI:49883"/>
    </ligand>
</feature>
<feature type="binding site" evidence="1">
    <location>
        <position position="15"/>
    </location>
    <ligand>
        <name>[4Fe-4S] cluster</name>
        <dbReference type="ChEBI" id="CHEBI:49883"/>
    </ligand>
</feature>
<feature type="binding site" evidence="1">
    <location>
        <position position="18"/>
    </location>
    <ligand>
        <name>[4Fe-4S] cluster</name>
        <dbReference type="ChEBI" id="CHEBI:49883"/>
    </ligand>
</feature>
<feature type="binding site" evidence="1">
    <location>
        <position position="94"/>
    </location>
    <ligand>
        <name>[4Fe-4S] cluster</name>
        <dbReference type="ChEBI" id="CHEBI:49883"/>
    </ligand>
</feature>
<feature type="binding site" evidence="1">
    <location>
        <position position="219"/>
    </location>
    <ligand>
        <name>S-adenosyl-L-methionine</name>
        <dbReference type="ChEBI" id="CHEBI:59789"/>
    </ligand>
</feature>
<feature type="binding site" evidence="1">
    <location>
        <position position="248"/>
    </location>
    <ligand>
        <name>S-adenosyl-L-methionine</name>
        <dbReference type="ChEBI" id="CHEBI:59789"/>
    </ligand>
</feature>
<feature type="binding site" evidence="1">
    <location>
        <position position="269"/>
    </location>
    <ligand>
        <name>S-adenosyl-L-methionine</name>
        <dbReference type="ChEBI" id="CHEBI:59789"/>
    </ligand>
</feature>
<feature type="binding site" evidence="1">
    <location>
        <position position="316"/>
    </location>
    <ligand>
        <name>S-adenosyl-L-methionine</name>
        <dbReference type="ChEBI" id="CHEBI:59789"/>
    </ligand>
</feature>
<accession>Q0HRR5</accession>
<keyword id="KW-0004">4Fe-4S</keyword>
<keyword id="KW-0408">Iron</keyword>
<keyword id="KW-0411">Iron-sulfur</keyword>
<keyword id="KW-0479">Metal-binding</keyword>
<keyword id="KW-0489">Methyltransferase</keyword>
<keyword id="KW-0698">rRNA processing</keyword>
<keyword id="KW-0949">S-adenosyl-L-methionine</keyword>
<keyword id="KW-0808">Transferase</keyword>
<comment type="function">
    <text evidence="1">Catalyzes the formation of 5-methyl-uridine at position 747 (m5U747) in 23S rRNA.</text>
</comment>
<comment type="catalytic activity">
    <reaction evidence="1">
        <text>uridine(747) in 23S rRNA + S-adenosyl-L-methionine = 5-methyluridine(747) in 23S rRNA + S-adenosyl-L-homocysteine + H(+)</text>
        <dbReference type="Rhea" id="RHEA:42628"/>
        <dbReference type="Rhea" id="RHEA-COMP:10154"/>
        <dbReference type="Rhea" id="RHEA-COMP:10155"/>
        <dbReference type="ChEBI" id="CHEBI:15378"/>
        <dbReference type="ChEBI" id="CHEBI:57856"/>
        <dbReference type="ChEBI" id="CHEBI:59789"/>
        <dbReference type="ChEBI" id="CHEBI:65315"/>
        <dbReference type="ChEBI" id="CHEBI:74447"/>
        <dbReference type="EC" id="2.1.1.189"/>
    </reaction>
</comment>
<comment type="similarity">
    <text evidence="1">Belongs to the class I-like SAM-binding methyltransferase superfamily. RNA M5U methyltransferase family. RlmC subfamily.</text>
</comment>
<name>RLMC_SHESR</name>
<dbReference type="EC" id="2.1.1.189" evidence="1"/>
<dbReference type="EMBL" id="CP000444">
    <property type="protein sequence ID" value="ABI44190.1"/>
    <property type="molecule type" value="Genomic_DNA"/>
</dbReference>
<dbReference type="SMR" id="Q0HRR5"/>
<dbReference type="KEGG" id="shm:Shewmr7_3206"/>
<dbReference type="HOGENOM" id="CLU_014689_0_0_6"/>
<dbReference type="GO" id="GO:0051539">
    <property type="term" value="F:4 iron, 4 sulfur cluster binding"/>
    <property type="evidence" value="ECO:0007669"/>
    <property type="project" value="UniProtKB-KW"/>
</dbReference>
<dbReference type="GO" id="GO:0005506">
    <property type="term" value="F:iron ion binding"/>
    <property type="evidence" value="ECO:0007669"/>
    <property type="project" value="UniProtKB-UniRule"/>
</dbReference>
<dbReference type="GO" id="GO:0070041">
    <property type="term" value="F:rRNA (uridine-C5-)-methyltransferase activity"/>
    <property type="evidence" value="ECO:0007669"/>
    <property type="project" value="UniProtKB-UniRule"/>
</dbReference>
<dbReference type="GO" id="GO:0070475">
    <property type="term" value="P:rRNA base methylation"/>
    <property type="evidence" value="ECO:0007669"/>
    <property type="project" value="TreeGrafter"/>
</dbReference>
<dbReference type="CDD" id="cd02440">
    <property type="entry name" value="AdoMet_MTases"/>
    <property type="match status" value="1"/>
</dbReference>
<dbReference type="FunFam" id="2.40.50.1070:FF:000002">
    <property type="entry name" value="23S rRNA (uracil(747)-C(5))-methyltransferase RlmC"/>
    <property type="match status" value="1"/>
</dbReference>
<dbReference type="Gene3D" id="2.40.50.1070">
    <property type="match status" value="1"/>
</dbReference>
<dbReference type="Gene3D" id="3.40.50.150">
    <property type="entry name" value="Vaccinia Virus protein VP39"/>
    <property type="match status" value="1"/>
</dbReference>
<dbReference type="HAMAP" id="MF_01012">
    <property type="entry name" value="23SrRNA_methyltr_RlmC"/>
    <property type="match status" value="1"/>
</dbReference>
<dbReference type="InterPro" id="IPR011825">
    <property type="entry name" value="23SrRNA_MeTrfase_RlmC"/>
</dbReference>
<dbReference type="InterPro" id="IPR030390">
    <property type="entry name" value="MeTrfase_TrmA_AS"/>
</dbReference>
<dbReference type="InterPro" id="IPR030391">
    <property type="entry name" value="MeTrfase_TrmA_CS"/>
</dbReference>
<dbReference type="InterPro" id="IPR029063">
    <property type="entry name" value="SAM-dependent_MTases_sf"/>
</dbReference>
<dbReference type="InterPro" id="IPR010280">
    <property type="entry name" value="U5_MeTrfase_fam"/>
</dbReference>
<dbReference type="NCBIfam" id="TIGR02085">
    <property type="entry name" value="meth_trns_rumB"/>
    <property type="match status" value="1"/>
</dbReference>
<dbReference type="NCBIfam" id="TIGR00479">
    <property type="entry name" value="rumA"/>
    <property type="match status" value="1"/>
</dbReference>
<dbReference type="PANTHER" id="PTHR11061">
    <property type="entry name" value="RNA M5U METHYLTRANSFERASE"/>
    <property type="match status" value="1"/>
</dbReference>
<dbReference type="PANTHER" id="PTHR11061:SF30">
    <property type="entry name" value="TRNA (URACIL(54)-C(5))-METHYLTRANSFERASE"/>
    <property type="match status" value="1"/>
</dbReference>
<dbReference type="Pfam" id="PF05958">
    <property type="entry name" value="tRNA_U5-meth_tr"/>
    <property type="match status" value="1"/>
</dbReference>
<dbReference type="SUPFAM" id="SSF53335">
    <property type="entry name" value="S-adenosyl-L-methionine-dependent methyltransferases"/>
    <property type="match status" value="1"/>
</dbReference>
<dbReference type="PROSITE" id="PS51687">
    <property type="entry name" value="SAM_MT_RNA_M5U"/>
    <property type="match status" value="1"/>
</dbReference>
<dbReference type="PROSITE" id="PS01230">
    <property type="entry name" value="TRMA_1"/>
    <property type="match status" value="1"/>
</dbReference>
<dbReference type="PROSITE" id="PS01231">
    <property type="entry name" value="TRMA_2"/>
    <property type="match status" value="1"/>
</dbReference>
<organism>
    <name type="scientific">Shewanella sp. (strain MR-7)</name>
    <dbReference type="NCBI Taxonomy" id="60481"/>
    <lineage>
        <taxon>Bacteria</taxon>
        <taxon>Pseudomonadati</taxon>
        <taxon>Pseudomonadota</taxon>
        <taxon>Gammaproteobacteria</taxon>
        <taxon>Alteromonadales</taxon>
        <taxon>Shewanellaceae</taxon>
        <taxon>Shewanella</taxon>
    </lineage>
</organism>
<protein>
    <recommendedName>
        <fullName evidence="1">23S rRNA (uracil(747)-C(5))-methyltransferase RlmC</fullName>
        <ecNumber evidence="1">2.1.1.189</ecNumber>
    </recommendedName>
    <alternativeName>
        <fullName evidence="1">23S rRNA(m5U747)-methyltransferase</fullName>
    </alternativeName>
</protein>
<proteinExistence type="inferred from homology"/>
<gene>
    <name evidence="1" type="primary">rlmC</name>
    <name type="synonym">rumB</name>
    <name type="ordered locus">Shewmr7_3206</name>
</gene>